<protein>
    <recommendedName>
        <fullName evidence="7">NADH dehydrogenase [ubiquinone] iron-sulfur protein 3, mitochondrial</fullName>
        <ecNumber evidence="2">7.1.1.2</ecNumber>
    </recommendedName>
    <alternativeName>
        <fullName evidence="8">NADH dehydrogenase (Ubiquinone) 30 kDa subunit</fullName>
    </alternativeName>
</protein>
<accession>Q9VZU4</accession>
<proteinExistence type="evidence at protein level"/>
<dbReference type="EC" id="7.1.1.2" evidence="2"/>
<dbReference type="EMBL" id="AE014296">
    <property type="protein sequence ID" value="AAF47723.1"/>
    <property type="molecule type" value="Genomic_DNA"/>
</dbReference>
<dbReference type="EMBL" id="AY118532">
    <property type="protein sequence ID" value="AAM49901.1"/>
    <property type="molecule type" value="mRNA"/>
</dbReference>
<dbReference type="EMBL" id="BT011342">
    <property type="protein sequence ID" value="AAR96134.1"/>
    <property type="molecule type" value="mRNA"/>
</dbReference>
<dbReference type="RefSeq" id="NP_647775.1">
    <property type="nucleotide sequence ID" value="NM_139518.3"/>
</dbReference>
<dbReference type="PDB" id="8B9Z">
    <property type="method" value="EM"/>
    <property type="resolution" value="3.28 A"/>
    <property type="chains" value="C=45-253"/>
</dbReference>
<dbReference type="PDB" id="8BA0">
    <property type="method" value="EM"/>
    <property type="resolution" value="3.68 A"/>
    <property type="chains" value="C=45-253"/>
</dbReference>
<dbReference type="PDB" id="8ESW">
    <property type="method" value="EM"/>
    <property type="resolution" value="3.30 A"/>
    <property type="chains" value="S3=1-265"/>
</dbReference>
<dbReference type="PDB" id="8ESZ">
    <property type="method" value="EM"/>
    <property type="resolution" value="3.40 A"/>
    <property type="chains" value="S3=1-265"/>
</dbReference>
<dbReference type="PDBsum" id="8B9Z"/>
<dbReference type="PDBsum" id="8BA0"/>
<dbReference type="PDBsum" id="8ESW"/>
<dbReference type="PDBsum" id="8ESZ"/>
<dbReference type="EMDB" id="EMD-15936"/>
<dbReference type="EMDB" id="EMD-15937"/>
<dbReference type="EMDB" id="EMD-28581"/>
<dbReference type="EMDB" id="EMD-28582"/>
<dbReference type="SMR" id="Q9VZU4"/>
<dbReference type="ComplexPortal" id="CPX-8628">
    <property type="entry name" value="Mitochondrial respiratory chain complex I"/>
</dbReference>
<dbReference type="ComplexPortal" id="CPX-8638">
    <property type="entry name" value="Mitochondrial respiratory chain complex I, testis-specific variant"/>
</dbReference>
<dbReference type="FunCoup" id="Q9VZU4">
    <property type="interactions" value="1324"/>
</dbReference>
<dbReference type="IntAct" id="Q9VZU4">
    <property type="interactions" value="1"/>
</dbReference>
<dbReference type="STRING" id="7227.FBpp0072975"/>
<dbReference type="PaxDb" id="7227-FBpp0072975"/>
<dbReference type="DNASU" id="38378"/>
<dbReference type="EnsemblMetazoa" id="FBtr0073113">
    <property type="protein sequence ID" value="FBpp0072975"/>
    <property type="gene ID" value="FBgn0266582"/>
</dbReference>
<dbReference type="GeneID" id="38378"/>
<dbReference type="KEGG" id="dme:Dmel_CG12079"/>
<dbReference type="UCSC" id="CG12079-RA">
    <property type="organism name" value="d. melanogaster"/>
</dbReference>
<dbReference type="AGR" id="FB:FBgn0266582"/>
<dbReference type="CTD" id="38378"/>
<dbReference type="FlyBase" id="FBgn0266582">
    <property type="gene designation" value="ND-30"/>
</dbReference>
<dbReference type="VEuPathDB" id="VectorBase:FBgn0266582"/>
<dbReference type="eggNOG" id="KOG1713">
    <property type="taxonomic scope" value="Eukaryota"/>
</dbReference>
<dbReference type="GeneTree" id="ENSGT00390000017480"/>
<dbReference type="HOGENOM" id="CLU_042628_0_1_1"/>
<dbReference type="InParanoid" id="Q9VZU4"/>
<dbReference type="OMA" id="PCRKNRF"/>
<dbReference type="OrthoDB" id="37721at2759"/>
<dbReference type="PhylomeDB" id="Q9VZU4"/>
<dbReference type="Reactome" id="R-DME-611105">
    <property type="pathway name" value="Respiratory electron transport"/>
</dbReference>
<dbReference type="Reactome" id="R-DME-6799198">
    <property type="pathway name" value="Complex I biogenesis"/>
</dbReference>
<dbReference type="Reactome" id="R-DME-9013408">
    <property type="pathway name" value="RHOG GTPase cycle"/>
</dbReference>
<dbReference type="Reactome" id="R-DME-9837999">
    <property type="pathway name" value="Mitochondrial protein degradation"/>
</dbReference>
<dbReference type="SignaLink" id="Q9VZU4"/>
<dbReference type="BioGRID-ORCS" id="38378">
    <property type="hits" value="0 hits in 1 CRISPR screen"/>
</dbReference>
<dbReference type="GenomeRNAi" id="38378"/>
<dbReference type="PRO" id="PR:Q9VZU4"/>
<dbReference type="Proteomes" id="UP000000803">
    <property type="component" value="Chromosome 3L"/>
</dbReference>
<dbReference type="Bgee" id="FBgn0266582">
    <property type="expression patterns" value="Expressed in lamina wide-field cell Lawf2 (Drosophila) in brain and 241 other cell types or tissues"/>
</dbReference>
<dbReference type="GO" id="GO:0005743">
    <property type="term" value="C:mitochondrial inner membrane"/>
    <property type="evidence" value="ECO:0000305"/>
    <property type="project" value="FlyBase"/>
</dbReference>
<dbReference type="GO" id="GO:0005739">
    <property type="term" value="C:mitochondrion"/>
    <property type="evidence" value="ECO:0000314"/>
    <property type="project" value="UniProtKB"/>
</dbReference>
<dbReference type="GO" id="GO:0045271">
    <property type="term" value="C:respiratory chain complex I"/>
    <property type="evidence" value="ECO:0000314"/>
    <property type="project" value="FlyBase"/>
</dbReference>
<dbReference type="GO" id="GO:0008137">
    <property type="term" value="F:NADH dehydrogenase (ubiquinone) activity"/>
    <property type="evidence" value="ECO:0007669"/>
    <property type="project" value="UniProtKB-EC"/>
</dbReference>
<dbReference type="GO" id="GO:0006120">
    <property type="term" value="P:mitochondrial electron transport, NADH to ubiquinone"/>
    <property type="evidence" value="ECO:0000305"/>
    <property type="project" value="FlyBase"/>
</dbReference>
<dbReference type="GO" id="GO:0072593">
    <property type="term" value="P:reactive oxygen species metabolic process"/>
    <property type="evidence" value="ECO:0000250"/>
    <property type="project" value="FlyBase"/>
</dbReference>
<dbReference type="FunFam" id="3.30.460.80:FF:000002">
    <property type="entry name" value="NADH dehydrogenase iron-sulfur protein 3, mitochondrial"/>
    <property type="match status" value="1"/>
</dbReference>
<dbReference type="Gene3D" id="3.30.460.80">
    <property type="entry name" value="NADH:ubiquinone oxidoreductase, 30kDa subunit"/>
    <property type="match status" value="1"/>
</dbReference>
<dbReference type="HAMAP" id="MF_01357">
    <property type="entry name" value="NDH1_NuoC"/>
    <property type="match status" value="1"/>
</dbReference>
<dbReference type="InterPro" id="IPR010218">
    <property type="entry name" value="NADH_DH_suC"/>
</dbReference>
<dbReference type="InterPro" id="IPR037232">
    <property type="entry name" value="NADH_quin_OxRdtase_su_C/D-like"/>
</dbReference>
<dbReference type="InterPro" id="IPR001268">
    <property type="entry name" value="NADH_UbQ_OxRdtase_30kDa_su"/>
</dbReference>
<dbReference type="InterPro" id="IPR020396">
    <property type="entry name" value="NADH_UbQ_OxRdtase_CS"/>
</dbReference>
<dbReference type="NCBIfam" id="TIGR01961">
    <property type="entry name" value="NuoC_fam"/>
    <property type="match status" value="1"/>
</dbReference>
<dbReference type="NCBIfam" id="NF004733">
    <property type="entry name" value="PRK06074.1-5"/>
    <property type="match status" value="1"/>
</dbReference>
<dbReference type="PANTHER" id="PTHR10884:SF14">
    <property type="entry name" value="NADH DEHYDROGENASE [UBIQUINONE] IRON-SULFUR PROTEIN 3, MITOCHONDRIAL"/>
    <property type="match status" value="1"/>
</dbReference>
<dbReference type="PANTHER" id="PTHR10884">
    <property type="entry name" value="NADH DEHYDROGENASE UBIQUINONE IRON-SULFUR PROTEIN 3"/>
    <property type="match status" value="1"/>
</dbReference>
<dbReference type="Pfam" id="PF00329">
    <property type="entry name" value="Complex1_30kDa"/>
    <property type="match status" value="1"/>
</dbReference>
<dbReference type="SUPFAM" id="SSF143243">
    <property type="entry name" value="Nqo5-like"/>
    <property type="match status" value="1"/>
</dbReference>
<dbReference type="PROSITE" id="PS00542">
    <property type="entry name" value="COMPLEX1_30K"/>
    <property type="match status" value="1"/>
</dbReference>
<name>NDUS3_DROME</name>
<evidence type="ECO:0000250" key="1">
    <source>
        <dbReference type="UniProtKB" id="O75489"/>
    </source>
</evidence>
<evidence type="ECO:0000250" key="2">
    <source>
        <dbReference type="UniProtKB" id="Q56219"/>
    </source>
</evidence>
<evidence type="ECO:0000255" key="3"/>
<evidence type="ECO:0000269" key="4">
    <source>
    </source>
</evidence>
<evidence type="ECO:0000269" key="5">
    <source>
    </source>
</evidence>
<evidence type="ECO:0000303" key="6">
    <source>
    </source>
</evidence>
<evidence type="ECO:0000305" key="7"/>
<evidence type="ECO:0000312" key="8">
    <source>
        <dbReference type="EMBL" id="AAF47723.1"/>
    </source>
</evidence>
<evidence type="ECO:0000312" key="9">
    <source>
        <dbReference type="EMBL" id="AAM49901.1"/>
    </source>
</evidence>
<evidence type="ECO:0000312" key="10">
    <source>
        <dbReference type="EMBL" id="AAR96134.1"/>
    </source>
</evidence>
<evidence type="ECO:0000312" key="11">
    <source>
        <dbReference type="FlyBase" id="FBgn0266582"/>
    </source>
</evidence>
<evidence type="ECO:0000312" key="12">
    <source>
        <dbReference type="Proteomes" id="UP000000803"/>
    </source>
</evidence>
<evidence type="ECO:0007829" key="13">
    <source>
        <dbReference type="PDB" id="8B9Z"/>
    </source>
</evidence>
<gene>
    <name evidence="11" type="primary">ND-30</name>
    <name evidence="6 11" type="synonym">NDUFS3</name>
    <name evidence="11" type="ORF">CG12079</name>
</gene>
<comment type="function">
    <text evidence="1 2">Core subunit of the mitochondrial membrane respiratory chain NADH dehydrogenase (Complex I) that is believed to belong to the minimal assembly required for catalysis. Complex I functions in the transfer of electrons from NADH to the respiratory chain. The immediate electron acceptor for the enzyme is believed to be ubiquinone.</text>
</comment>
<comment type="catalytic activity">
    <reaction evidence="2">
        <text>a ubiquinone + NADH + 5 H(+)(in) = a ubiquinol + NAD(+) + 4 H(+)(out)</text>
        <dbReference type="Rhea" id="RHEA:29091"/>
        <dbReference type="Rhea" id="RHEA-COMP:9565"/>
        <dbReference type="Rhea" id="RHEA-COMP:9566"/>
        <dbReference type="ChEBI" id="CHEBI:15378"/>
        <dbReference type="ChEBI" id="CHEBI:16389"/>
        <dbReference type="ChEBI" id="CHEBI:17976"/>
        <dbReference type="ChEBI" id="CHEBI:57540"/>
        <dbReference type="ChEBI" id="CHEBI:57945"/>
        <dbReference type="EC" id="7.1.1.2"/>
    </reaction>
</comment>
<comment type="subunit">
    <text evidence="1 4">Part of the mitochondrial membrane respiratory chain NADH dehydrogenase (Complex I) (By similarity). Interacts with sicily; interaction is stronger with unprocessed sicily protein (PubMed:23509070).</text>
</comment>
<comment type="subcellular location">
    <subcellularLocation>
        <location evidence="4">Mitochondrion</location>
    </subcellularLocation>
</comment>
<comment type="miscellaneous">
    <text evidence="5">Upon mitochondrial dysfunction, the translation of the mRNA occurring on the mitochondrial surface is impaired and amino acids non-coded by the RNA template are added to the C-terminal of the protein. The C-terminal extended proteins aggregates in the cytosol and are toxic. The phenomenon is called mitochondrial-stress induced translational termination impairment and protein carboxyl terminal extension (MISTERMINATE).</text>
</comment>
<comment type="similarity">
    <text evidence="7">Belongs to the complex I 30 kDa subunit family.</text>
</comment>
<organism evidence="12">
    <name type="scientific">Drosophila melanogaster</name>
    <name type="common">Fruit fly</name>
    <dbReference type="NCBI Taxonomy" id="7227"/>
    <lineage>
        <taxon>Eukaryota</taxon>
        <taxon>Metazoa</taxon>
        <taxon>Ecdysozoa</taxon>
        <taxon>Arthropoda</taxon>
        <taxon>Hexapoda</taxon>
        <taxon>Insecta</taxon>
        <taxon>Pterygota</taxon>
        <taxon>Neoptera</taxon>
        <taxon>Endopterygota</taxon>
        <taxon>Diptera</taxon>
        <taxon>Brachycera</taxon>
        <taxon>Muscomorpha</taxon>
        <taxon>Ephydroidea</taxon>
        <taxon>Drosophilidae</taxon>
        <taxon>Drosophila</taxon>
        <taxon>Sophophora</taxon>
    </lineage>
</organism>
<feature type="transit peptide" description="Mitochondrion" evidence="3">
    <location>
        <begin position="1"/>
        <end position="33"/>
    </location>
</feature>
<feature type="chain" id="PRO_0000451151" description="NADH dehydrogenase [ubiquinone] iron-sulfur protein 3, mitochondrial" evidence="3">
    <location>
        <begin position="34"/>
        <end position="265"/>
    </location>
</feature>
<feature type="strand" evidence="13">
    <location>
        <begin position="47"/>
        <end position="49"/>
    </location>
</feature>
<feature type="helix" evidence="13">
    <location>
        <begin position="54"/>
        <end position="70"/>
    </location>
</feature>
<feature type="turn" evidence="13">
    <location>
        <begin position="72"/>
        <end position="74"/>
    </location>
</feature>
<feature type="strand" evidence="13">
    <location>
        <begin position="75"/>
        <end position="80"/>
    </location>
</feature>
<feature type="strand" evidence="13">
    <location>
        <begin position="86"/>
        <end position="90"/>
    </location>
</feature>
<feature type="helix" evidence="13">
    <location>
        <begin position="92"/>
        <end position="94"/>
    </location>
</feature>
<feature type="helix" evidence="13">
    <location>
        <begin position="95"/>
        <end position="104"/>
    </location>
</feature>
<feature type="turn" evidence="13">
    <location>
        <begin position="106"/>
        <end position="108"/>
    </location>
</feature>
<feature type="strand" evidence="13">
    <location>
        <begin position="112"/>
        <end position="120"/>
    </location>
</feature>
<feature type="strand" evidence="13">
    <location>
        <begin position="124"/>
        <end position="126"/>
    </location>
</feature>
<feature type="strand" evidence="13">
    <location>
        <begin position="128"/>
        <end position="136"/>
    </location>
</feature>
<feature type="turn" evidence="13">
    <location>
        <begin position="137"/>
        <end position="140"/>
    </location>
</feature>
<feature type="strand" evidence="13">
    <location>
        <begin position="141"/>
        <end position="149"/>
    </location>
</feature>
<feature type="strand" evidence="13">
    <location>
        <begin position="151"/>
        <end position="153"/>
    </location>
</feature>
<feature type="turn" evidence="13">
    <location>
        <begin position="159"/>
        <end position="161"/>
    </location>
</feature>
<feature type="helix" evidence="13">
    <location>
        <begin position="165"/>
        <end position="176"/>
    </location>
</feature>
<feature type="strand" evidence="13">
    <location>
        <begin position="189"/>
        <end position="191"/>
    </location>
</feature>
<feature type="strand" evidence="13">
    <location>
        <begin position="209"/>
        <end position="215"/>
    </location>
</feature>
<feature type="turn" evidence="13">
    <location>
        <begin position="216"/>
        <end position="219"/>
    </location>
</feature>
<feature type="strand" evidence="13">
    <location>
        <begin position="220"/>
        <end position="225"/>
    </location>
</feature>
<feature type="strand" evidence="13">
    <location>
        <begin position="228"/>
        <end position="230"/>
    </location>
</feature>
<feature type="helix" evidence="13">
    <location>
        <begin position="245"/>
        <end position="247"/>
    </location>
</feature>
<keyword id="KW-0002">3D-structure</keyword>
<keyword id="KW-0249">Electron transport</keyword>
<keyword id="KW-0496">Mitochondrion</keyword>
<keyword id="KW-0520">NAD</keyword>
<keyword id="KW-0560">Oxidoreductase</keyword>
<keyword id="KW-1185">Reference proteome</keyword>
<keyword id="KW-0679">Respiratory chain</keyword>
<keyword id="KW-0809">Transit peptide</keyword>
<keyword id="KW-1278">Translocase</keyword>
<keyword id="KW-0813">Transport</keyword>
<keyword id="KW-0830">Ubiquinone</keyword>
<sequence length="265" mass="29971">MAALIRNLGARAAVAALSAKHVVPAAGSTALRMASTTPVEPKKADKPTVRQPDAVARSHLSDFGRYVAECLPKYVQKVQLTAGDELEVLIAPEGVVPVLQFLKDHHQAQFTNLVDIAGVDVPCRKNRFEVVYNLLSLRYNSRIRVKTYTDELTPLDSACEVHKAANWYEREIWDMYGVFFANHPDLRRILTDYGFEGHPQRRDFPLSGYVELRYDDEKKRVVCEPLELAQEFRKFDLSAPWEQFPNFRNANPPAEVVPPQAPAKK</sequence>
<reference evidence="12" key="1">
    <citation type="journal article" date="2000" name="Science">
        <title>The genome sequence of Drosophila melanogaster.</title>
        <authorList>
            <person name="Adams M.D."/>
            <person name="Celniker S.E."/>
            <person name="Holt R.A."/>
            <person name="Evans C.A."/>
            <person name="Gocayne J.D."/>
            <person name="Amanatides P.G."/>
            <person name="Scherer S.E."/>
            <person name="Li P.W."/>
            <person name="Hoskins R.A."/>
            <person name="Galle R.F."/>
            <person name="George R.A."/>
            <person name="Lewis S.E."/>
            <person name="Richards S."/>
            <person name="Ashburner M."/>
            <person name="Henderson S.N."/>
            <person name="Sutton G.G."/>
            <person name="Wortman J.R."/>
            <person name="Yandell M.D."/>
            <person name="Zhang Q."/>
            <person name="Chen L.X."/>
            <person name="Brandon R.C."/>
            <person name="Rogers Y.-H.C."/>
            <person name="Blazej R.G."/>
            <person name="Champe M."/>
            <person name="Pfeiffer B.D."/>
            <person name="Wan K.H."/>
            <person name="Doyle C."/>
            <person name="Baxter E.G."/>
            <person name="Helt G."/>
            <person name="Nelson C.R."/>
            <person name="Miklos G.L.G."/>
            <person name="Abril J.F."/>
            <person name="Agbayani A."/>
            <person name="An H.-J."/>
            <person name="Andrews-Pfannkoch C."/>
            <person name="Baldwin D."/>
            <person name="Ballew R.M."/>
            <person name="Basu A."/>
            <person name="Baxendale J."/>
            <person name="Bayraktaroglu L."/>
            <person name="Beasley E.M."/>
            <person name="Beeson K.Y."/>
            <person name="Benos P.V."/>
            <person name="Berman B.P."/>
            <person name="Bhandari D."/>
            <person name="Bolshakov S."/>
            <person name="Borkova D."/>
            <person name="Botchan M.R."/>
            <person name="Bouck J."/>
            <person name="Brokstein P."/>
            <person name="Brottier P."/>
            <person name="Burtis K.C."/>
            <person name="Busam D.A."/>
            <person name="Butler H."/>
            <person name="Cadieu E."/>
            <person name="Center A."/>
            <person name="Chandra I."/>
            <person name="Cherry J.M."/>
            <person name="Cawley S."/>
            <person name="Dahlke C."/>
            <person name="Davenport L.B."/>
            <person name="Davies P."/>
            <person name="de Pablos B."/>
            <person name="Delcher A."/>
            <person name="Deng Z."/>
            <person name="Mays A.D."/>
            <person name="Dew I."/>
            <person name="Dietz S.M."/>
            <person name="Dodson K."/>
            <person name="Doup L.E."/>
            <person name="Downes M."/>
            <person name="Dugan-Rocha S."/>
            <person name="Dunkov B.C."/>
            <person name="Dunn P."/>
            <person name="Durbin K.J."/>
            <person name="Evangelista C.C."/>
            <person name="Ferraz C."/>
            <person name="Ferriera S."/>
            <person name="Fleischmann W."/>
            <person name="Fosler C."/>
            <person name="Gabrielian A.E."/>
            <person name="Garg N.S."/>
            <person name="Gelbart W.M."/>
            <person name="Glasser K."/>
            <person name="Glodek A."/>
            <person name="Gong F."/>
            <person name="Gorrell J.H."/>
            <person name="Gu Z."/>
            <person name="Guan P."/>
            <person name="Harris M."/>
            <person name="Harris N.L."/>
            <person name="Harvey D.A."/>
            <person name="Heiman T.J."/>
            <person name="Hernandez J.R."/>
            <person name="Houck J."/>
            <person name="Hostin D."/>
            <person name="Houston K.A."/>
            <person name="Howland T.J."/>
            <person name="Wei M.-H."/>
            <person name="Ibegwam C."/>
            <person name="Jalali M."/>
            <person name="Kalush F."/>
            <person name="Karpen G.H."/>
            <person name="Ke Z."/>
            <person name="Kennison J.A."/>
            <person name="Ketchum K.A."/>
            <person name="Kimmel B.E."/>
            <person name="Kodira C.D."/>
            <person name="Kraft C.L."/>
            <person name="Kravitz S."/>
            <person name="Kulp D."/>
            <person name="Lai Z."/>
            <person name="Lasko P."/>
            <person name="Lei Y."/>
            <person name="Levitsky A.A."/>
            <person name="Li J.H."/>
            <person name="Li Z."/>
            <person name="Liang Y."/>
            <person name="Lin X."/>
            <person name="Liu X."/>
            <person name="Mattei B."/>
            <person name="McIntosh T.C."/>
            <person name="McLeod M.P."/>
            <person name="McPherson D."/>
            <person name="Merkulov G."/>
            <person name="Milshina N.V."/>
            <person name="Mobarry C."/>
            <person name="Morris J."/>
            <person name="Moshrefi A."/>
            <person name="Mount S.M."/>
            <person name="Moy M."/>
            <person name="Murphy B."/>
            <person name="Murphy L."/>
            <person name="Muzny D.M."/>
            <person name="Nelson D.L."/>
            <person name="Nelson D.R."/>
            <person name="Nelson K.A."/>
            <person name="Nixon K."/>
            <person name="Nusskern D.R."/>
            <person name="Pacleb J.M."/>
            <person name="Palazzolo M."/>
            <person name="Pittman G.S."/>
            <person name="Pan S."/>
            <person name="Pollard J."/>
            <person name="Puri V."/>
            <person name="Reese M.G."/>
            <person name="Reinert K."/>
            <person name="Remington K."/>
            <person name="Saunders R.D.C."/>
            <person name="Scheeler F."/>
            <person name="Shen H."/>
            <person name="Shue B.C."/>
            <person name="Siden-Kiamos I."/>
            <person name="Simpson M."/>
            <person name="Skupski M.P."/>
            <person name="Smith T.J."/>
            <person name="Spier E."/>
            <person name="Spradling A.C."/>
            <person name="Stapleton M."/>
            <person name="Strong R."/>
            <person name="Sun E."/>
            <person name="Svirskas R."/>
            <person name="Tector C."/>
            <person name="Turner R."/>
            <person name="Venter E."/>
            <person name="Wang A.H."/>
            <person name="Wang X."/>
            <person name="Wang Z.-Y."/>
            <person name="Wassarman D.A."/>
            <person name="Weinstock G.M."/>
            <person name="Weissenbach J."/>
            <person name="Williams S.M."/>
            <person name="Woodage T."/>
            <person name="Worley K.C."/>
            <person name="Wu D."/>
            <person name="Yang S."/>
            <person name="Yao Q.A."/>
            <person name="Ye J."/>
            <person name="Yeh R.-F."/>
            <person name="Zaveri J.S."/>
            <person name="Zhan M."/>
            <person name="Zhang G."/>
            <person name="Zhao Q."/>
            <person name="Zheng L."/>
            <person name="Zheng X.H."/>
            <person name="Zhong F.N."/>
            <person name="Zhong W."/>
            <person name="Zhou X."/>
            <person name="Zhu S.C."/>
            <person name="Zhu X."/>
            <person name="Smith H.O."/>
            <person name="Gibbs R.A."/>
            <person name="Myers E.W."/>
            <person name="Rubin G.M."/>
            <person name="Venter J.C."/>
        </authorList>
    </citation>
    <scope>NUCLEOTIDE SEQUENCE [LARGE SCALE GENOMIC DNA]</scope>
    <source>
        <strain evidence="12">Berkeley</strain>
    </source>
</reference>
<reference evidence="12" key="2">
    <citation type="journal article" date="2002" name="Genome Biol.">
        <title>Annotation of the Drosophila melanogaster euchromatic genome: a systematic review.</title>
        <authorList>
            <person name="Misra S."/>
            <person name="Crosby M.A."/>
            <person name="Mungall C.J."/>
            <person name="Matthews B.B."/>
            <person name="Campbell K.S."/>
            <person name="Hradecky P."/>
            <person name="Huang Y."/>
            <person name="Kaminker J.S."/>
            <person name="Millburn G.H."/>
            <person name="Prochnik S.E."/>
            <person name="Smith C.D."/>
            <person name="Tupy J.L."/>
            <person name="Whitfield E.J."/>
            <person name="Bayraktaroglu L."/>
            <person name="Berman B.P."/>
            <person name="Bettencourt B.R."/>
            <person name="Celniker S.E."/>
            <person name="de Grey A.D.N.J."/>
            <person name="Drysdale R.A."/>
            <person name="Harris N.L."/>
            <person name="Richter J."/>
            <person name="Russo S."/>
            <person name="Schroeder A.J."/>
            <person name="Shu S.Q."/>
            <person name="Stapleton M."/>
            <person name="Yamada C."/>
            <person name="Ashburner M."/>
            <person name="Gelbart W.M."/>
            <person name="Rubin G.M."/>
            <person name="Lewis S.E."/>
        </authorList>
    </citation>
    <scope>GENOME REANNOTATION</scope>
    <source>
        <strain evidence="12">Berkeley</strain>
    </source>
</reference>
<reference evidence="9" key="3">
    <citation type="journal article" date="2002" name="Genome Biol.">
        <title>A Drosophila full-length cDNA resource.</title>
        <authorList>
            <person name="Stapleton M."/>
            <person name="Carlson J.W."/>
            <person name="Brokstein P."/>
            <person name="Yu C."/>
            <person name="Champe M."/>
            <person name="George R.A."/>
            <person name="Guarin H."/>
            <person name="Kronmiller B."/>
            <person name="Pacleb J.M."/>
            <person name="Park S."/>
            <person name="Wan K.H."/>
            <person name="Rubin G.M."/>
            <person name="Celniker S.E."/>
        </authorList>
    </citation>
    <scope>NUCLEOTIDE SEQUENCE [LARGE SCALE MRNA]</scope>
    <source>
        <strain evidence="9">Berkeley</strain>
        <tissue evidence="9">Embryo</tissue>
    </source>
</reference>
<reference evidence="10" key="4">
    <citation type="submission" date="2004-01" db="EMBL/GenBank/DDBJ databases">
        <authorList>
            <person name="Stapleton M."/>
            <person name="Carlson J."/>
            <person name="Chavez C."/>
            <person name="Frise E."/>
            <person name="George R."/>
            <person name="Pacleb J."/>
            <person name="Park S."/>
            <person name="Wan K."/>
            <person name="Yu C."/>
            <person name="Rubin G.M."/>
            <person name="Celniker S."/>
        </authorList>
    </citation>
    <scope>NUCLEOTIDE SEQUENCE [LARGE SCALE MRNA]</scope>
    <source>
        <strain evidence="10">Berkeley</strain>
    </source>
</reference>
<reference evidence="7" key="5">
    <citation type="journal article" date="2013" name="J. Cell Biol.">
        <title>The C8ORF38 homologue Sicily is a cytosolic chaperone for a mitochondrial complex I subunit.</title>
        <authorList>
            <person name="Zhang K."/>
            <person name="Li Z."/>
            <person name="Jaiswal M."/>
            <person name="Bayat V."/>
            <person name="Xiong B."/>
            <person name="Sandoval H."/>
            <person name="Charng W.L."/>
            <person name="David G."/>
            <person name="Haueter C."/>
            <person name="Yamamoto S."/>
            <person name="Graham B.H."/>
            <person name="Bellen H.J."/>
        </authorList>
    </citation>
    <scope>INTERACTION WITH SICILY</scope>
    <scope>SUBCELLULAR LOCATION</scope>
</reference>
<reference key="6">
    <citation type="journal article" date="2019" name="Mol. Cell">
        <title>MISTERMINATE Mechanistically Links Mitochondrial Dysfunction with Proteostasis Failure.</title>
        <authorList>
            <person name="Wu Z."/>
            <person name="Tantray I."/>
            <person name="Lim J."/>
            <person name="Chen S."/>
            <person name="Li Y."/>
            <person name="Davis Z."/>
            <person name="Sitron C."/>
            <person name="Dong J."/>
            <person name="Gispert S."/>
            <person name="Auburger G."/>
            <person name="Brandman O."/>
            <person name="Bi X."/>
            <person name="Snyder M."/>
            <person name="Lu B."/>
        </authorList>
    </citation>
    <scope>TRANSLATION TERMINATION IMPAIRMENT</scope>
</reference>